<dbReference type="GO" id="GO:0005576">
    <property type="term" value="C:extracellular region"/>
    <property type="evidence" value="ECO:0007669"/>
    <property type="project" value="UniProtKB-SubCell"/>
</dbReference>
<dbReference type="GO" id="GO:0007218">
    <property type="term" value="P:neuropeptide signaling pathway"/>
    <property type="evidence" value="ECO:0007669"/>
    <property type="project" value="UniProtKB-KW"/>
</dbReference>
<dbReference type="InterPro" id="IPR013231">
    <property type="entry name" value="Periviscerokinin"/>
</dbReference>
<dbReference type="Pfam" id="PF08259">
    <property type="entry name" value="Periviscerokin"/>
    <property type="match status" value="1"/>
</dbReference>
<reference evidence="4" key="1">
    <citation type="journal article" date="2005" name="Peptides">
        <title>Peptidomics of neurohemal organs from species of the cockroach family Blattidae: how do neuropeptides of closely related species differ?</title>
        <authorList>
            <person name="Predel R."/>
            <person name="Gaede G."/>
        </authorList>
    </citation>
    <scope>PROTEIN SEQUENCE</scope>
    <scope>MASS SPECTROMETRY</scope>
    <scope>AMIDATION AT VAL-11</scope>
    <source>
        <tissue evidence="2">Abdominal perisympathetic organs</tissue>
    </source>
</reference>
<reference key="2">
    <citation type="journal article" date="2009" name="BMC Evol. Biol.">
        <title>A proteomic approach for studying insect phylogeny: CAPA peptides of ancient insect taxa (Dictyoptera, Blattoptera) as a test case.</title>
        <authorList>
            <person name="Roth S."/>
            <person name="Fromm B."/>
            <person name="Gaede G."/>
            <person name="Predel R."/>
        </authorList>
    </citation>
    <scope>PROTEIN SEQUENCE</scope>
    <scope>AMIDATION AT VAL-11</scope>
</reference>
<proteinExistence type="evidence at protein level"/>
<comment type="function">
    <text evidence="4">Mediates visceral muscle contractile activity (myotropic activity).</text>
</comment>
<comment type="subcellular location">
    <subcellularLocation>
        <location evidence="4">Secreted</location>
    </subcellularLocation>
</comment>
<comment type="mass spectrometry"/>
<comment type="similarity">
    <text evidence="1">Belongs to the periviscerokinin family.</text>
</comment>
<keyword id="KW-0027">Amidation</keyword>
<keyword id="KW-0903">Direct protein sequencing</keyword>
<keyword id="KW-0527">Neuropeptide</keyword>
<keyword id="KW-0964">Secreted</keyword>
<protein>
    <recommendedName>
        <fullName>Periviscerokinin-2.2</fullName>
    </recommendedName>
    <alternativeName>
        <fullName>Lem-PVK-2-like peptide</fullName>
    </alternativeName>
    <alternativeName>
        <fullName>Periviscerokinin-2</fullName>
        <shortName>PerAm-PVK-2</shortName>
    </alternativeName>
</protein>
<accession>P84422</accession>
<feature type="peptide" id="PRO_0000044269" description="Periviscerokinin-2.2">
    <location>
        <begin position="1"/>
        <end position="11"/>
    </location>
</feature>
<feature type="modified residue" description="Valine amide" evidence="2 3">
    <location>
        <position position="11"/>
    </location>
</feature>
<name>PVK22_PERAM</name>
<organism>
    <name type="scientific">Periplaneta americana</name>
    <name type="common">American cockroach</name>
    <name type="synonym">Blatta americana</name>
    <dbReference type="NCBI Taxonomy" id="6978"/>
    <lineage>
        <taxon>Eukaryota</taxon>
        <taxon>Metazoa</taxon>
        <taxon>Ecdysozoa</taxon>
        <taxon>Arthropoda</taxon>
        <taxon>Hexapoda</taxon>
        <taxon>Insecta</taxon>
        <taxon>Pterygota</taxon>
        <taxon>Neoptera</taxon>
        <taxon>Polyneoptera</taxon>
        <taxon>Dictyoptera</taxon>
        <taxon>Blattodea</taxon>
        <taxon>Blattoidea</taxon>
        <taxon>Blattidae</taxon>
        <taxon>Blattinae</taxon>
        <taxon>Periplaneta</taxon>
    </lineage>
</organism>
<evidence type="ECO:0000255" key="1"/>
<evidence type="ECO:0000269" key="2">
    <source>
    </source>
</evidence>
<evidence type="ECO:0000269" key="3">
    <source>
    </source>
</evidence>
<evidence type="ECO:0000305" key="4"/>
<sequence>GSSGLISMPRV</sequence>